<name>Y2444_RALN1</name>
<organism>
    <name type="scientific">Ralstonia nicotianae (strain ATCC BAA-1114 / GMI1000)</name>
    <name type="common">Ralstonia solanacearum</name>
    <dbReference type="NCBI Taxonomy" id="267608"/>
    <lineage>
        <taxon>Bacteria</taxon>
        <taxon>Pseudomonadati</taxon>
        <taxon>Pseudomonadota</taxon>
        <taxon>Betaproteobacteria</taxon>
        <taxon>Burkholderiales</taxon>
        <taxon>Burkholderiaceae</taxon>
        <taxon>Ralstonia</taxon>
        <taxon>Ralstonia solanacearum species complex</taxon>
    </lineage>
</organism>
<comment type="similarity">
    <text evidence="2">Belongs to the UPF0758 family.</text>
</comment>
<proteinExistence type="inferred from homology"/>
<protein>
    <recommendedName>
        <fullName>UPF0758 protein RSc2444</fullName>
    </recommendedName>
</protein>
<dbReference type="EMBL" id="AL646052">
    <property type="protein sequence ID" value="CAD16151.1"/>
    <property type="molecule type" value="Genomic_DNA"/>
</dbReference>
<dbReference type="RefSeq" id="WP_011002363.1">
    <property type="nucleotide sequence ID" value="NC_003295.1"/>
</dbReference>
<dbReference type="SMR" id="Q8XWN0"/>
<dbReference type="STRING" id="267608.RSc2444"/>
<dbReference type="EnsemblBacteria" id="CAD16151">
    <property type="protein sequence ID" value="CAD16151"/>
    <property type="gene ID" value="RSc2444"/>
</dbReference>
<dbReference type="KEGG" id="rso:RSc2444"/>
<dbReference type="PATRIC" id="fig|267608.8.peg.2487"/>
<dbReference type="eggNOG" id="COG2003">
    <property type="taxonomic scope" value="Bacteria"/>
</dbReference>
<dbReference type="HOGENOM" id="CLU_073529_0_2_4"/>
<dbReference type="Proteomes" id="UP000001436">
    <property type="component" value="Chromosome"/>
</dbReference>
<dbReference type="GO" id="GO:0046872">
    <property type="term" value="F:metal ion binding"/>
    <property type="evidence" value="ECO:0007669"/>
    <property type="project" value="UniProtKB-KW"/>
</dbReference>
<dbReference type="GO" id="GO:0008237">
    <property type="term" value="F:metallopeptidase activity"/>
    <property type="evidence" value="ECO:0007669"/>
    <property type="project" value="UniProtKB-KW"/>
</dbReference>
<dbReference type="GO" id="GO:0006508">
    <property type="term" value="P:proteolysis"/>
    <property type="evidence" value="ECO:0007669"/>
    <property type="project" value="UniProtKB-KW"/>
</dbReference>
<dbReference type="CDD" id="cd08071">
    <property type="entry name" value="MPN_DUF2466"/>
    <property type="match status" value="1"/>
</dbReference>
<dbReference type="Gene3D" id="1.10.150.20">
    <property type="entry name" value="5' to 3' exonuclease, C-terminal subdomain"/>
    <property type="match status" value="1"/>
</dbReference>
<dbReference type="Gene3D" id="3.40.140.10">
    <property type="entry name" value="Cytidine Deaminase, domain 2"/>
    <property type="match status" value="1"/>
</dbReference>
<dbReference type="InterPro" id="IPR037518">
    <property type="entry name" value="MPN"/>
</dbReference>
<dbReference type="InterPro" id="IPR025657">
    <property type="entry name" value="RadC_JAB"/>
</dbReference>
<dbReference type="InterPro" id="IPR010994">
    <property type="entry name" value="RuvA_2-like"/>
</dbReference>
<dbReference type="InterPro" id="IPR001405">
    <property type="entry name" value="UPF0758"/>
</dbReference>
<dbReference type="InterPro" id="IPR046778">
    <property type="entry name" value="UPF0758_N"/>
</dbReference>
<dbReference type="NCBIfam" id="NF000642">
    <property type="entry name" value="PRK00024.1"/>
    <property type="match status" value="1"/>
</dbReference>
<dbReference type="NCBIfam" id="TIGR00608">
    <property type="entry name" value="radc"/>
    <property type="match status" value="1"/>
</dbReference>
<dbReference type="PANTHER" id="PTHR30471">
    <property type="entry name" value="DNA REPAIR PROTEIN RADC"/>
    <property type="match status" value="1"/>
</dbReference>
<dbReference type="PANTHER" id="PTHR30471:SF3">
    <property type="entry name" value="UPF0758 PROTEIN YEES-RELATED"/>
    <property type="match status" value="1"/>
</dbReference>
<dbReference type="Pfam" id="PF04002">
    <property type="entry name" value="RadC"/>
    <property type="match status" value="1"/>
</dbReference>
<dbReference type="Pfam" id="PF20582">
    <property type="entry name" value="UPF0758_N"/>
    <property type="match status" value="1"/>
</dbReference>
<dbReference type="SUPFAM" id="SSF47781">
    <property type="entry name" value="RuvA domain 2-like"/>
    <property type="match status" value="1"/>
</dbReference>
<dbReference type="PROSITE" id="PS50249">
    <property type="entry name" value="MPN"/>
    <property type="match status" value="1"/>
</dbReference>
<gene>
    <name type="ordered locus">RSc2444</name>
    <name type="ORF">RS01350</name>
</gene>
<keyword id="KW-0378">Hydrolase</keyword>
<keyword id="KW-0479">Metal-binding</keyword>
<keyword id="KW-0482">Metalloprotease</keyword>
<keyword id="KW-0645">Protease</keyword>
<keyword id="KW-1185">Reference proteome</keyword>
<keyword id="KW-0862">Zinc</keyword>
<accession>Q8XWN0</accession>
<reference key="1">
    <citation type="journal article" date="2002" name="Nature">
        <title>Genome sequence of the plant pathogen Ralstonia solanacearum.</title>
        <authorList>
            <person name="Salanoubat M."/>
            <person name="Genin S."/>
            <person name="Artiguenave F."/>
            <person name="Gouzy J."/>
            <person name="Mangenot S."/>
            <person name="Arlat M."/>
            <person name="Billault A."/>
            <person name="Brottier P."/>
            <person name="Camus J.-C."/>
            <person name="Cattolico L."/>
            <person name="Chandler M."/>
            <person name="Choisne N."/>
            <person name="Claudel-Renard C."/>
            <person name="Cunnac S."/>
            <person name="Demange N."/>
            <person name="Gaspin C."/>
            <person name="Lavie M."/>
            <person name="Moisan A."/>
            <person name="Robert C."/>
            <person name="Saurin W."/>
            <person name="Schiex T."/>
            <person name="Siguier P."/>
            <person name="Thebault P."/>
            <person name="Whalen M."/>
            <person name="Wincker P."/>
            <person name="Levy M."/>
            <person name="Weissenbach J."/>
            <person name="Boucher C.A."/>
        </authorList>
    </citation>
    <scope>NUCLEOTIDE SEQUENCE [LARGE SCALE GENOMIC DNA]</scope>
    <source>
        <strain>ATCC BAA-1114 / GMI1000</strain>
    </source>
</reference>
<sequence>MAIADWPAHERPREKLLTQGPAALSDAELLAIFLRVGMPGKSAVDLARELLAHFGSLGRLCHASRREFSAIHGMGPAKYAQLHALLEVARRALKEEIAYGQTLESPQSVKDFLRLTLGHRPQEVFACLFLDVRHRLIAWEELFQGTLTEARVYPREIAKRALHHNASALILSHNHPTGHVEPSESDLVLTRELCRALALLDVRVLDHMIVGRAEVYSFLEHGKM</sequence>
<feature type="chain" id="PRO_0000190720" description="UPF0758 protein RSc2444">
    <location>
        <begin position="1"/>
        <end position="224"/>
    </location>
</feature>
<feature type="domain" description="MPN" evidence="1">
    <location>
        <begin position="102"/>
        <end position="224"/>
    </location>
</feature>
<feature type="short sequence motif" description="JAMM motif" evidence="1">
    <location>
        <begin position="173"/>
        <end position="186"/>
    </location>
</feature>
<feature type="binding site" evidence="1">
    <location>
        <position position="173"/>
    </location>
    <ligand>
        <name>Zn(2+)</name>
        <dbReference type="ChEBI" id="CHEBI:29105"/>
        <note>catalytic</note>
    </ligand>
</feature>
<feature type="binding site" evidence="1">
    <location>
        <position position="175"/>
    </location>
    <ligand>
        <name>Zn(2+)</name>
        <dbReference type="ChEBI" id="CHEBI:29105"/>
        <note>catalytic</note>
    </ligand>
</feature>
<feature type="binding site" evidence="1">
    <location>
        <position position="186"/>
    </location>
    <ligand>
        <name>Zn(2+)</name>
        <dbReference type="ChEBI" id="CHEBI:29105"/>
        <note>catalytic</note>
    </ligand>
</feature>
<evidence type="ECO:0000255" key="1">
    <source>
        <dbReference type="PROSITE-ProRule" id="PRU01182"/>
    </source>
</evidence>
<evidence type="ECO:0000305" key="2"/>